<protein>
    <recommendedName>
        <fullName>RNA1 polyprotein</fullName>
    </recommendedName>
    <alternativeName>
        <fullName>P1</fullName>
    </alternativeName>
    <component>
        <recommendedName>
            <fullName>Putative helicase</fullName>
            <ecNumber>3.6.4.-</ecNumber>
        </recommendedName>
        <alternativeName>
            <fullName>Putative NTP-binding protein</fullName>
        </alternativeName>
    </component>
    <component>
        <recommendedName>
            <fullName>Probable picornain 3C-like protease</fullName>
            <shortName>3C-like protease</shortName>
            <ecNumber>3.4.22.-</ecNumber>
        </recommendedName>
    </component>
    <component>
        <recommendedName>
            <fullName>Probable RNA-directed RNA polymerase</fullName>
            <ecNumber>2.7.7.48</ecNumber>
        </recommendedName>
    </component>
</protein>
<reference key="1">
    <citation type="journal article" date="1999" name="J. Gen. Virol.">
        <title>Nucleotide sequences and taxonomy of satsuma dwarf virus.</title>
        <authorList>
            <person name="Iwanami T."/>
            <person name="Kondo Y."/>
            <person name="Karasev A.V."/>
        </authorList>
    </citation>
    <scope>NUCLEOTIDE SEQUENCE [GENOMIC RNA]</scope>
</reference>
<organismHost>
    <name type="scientific">Citrus unshiu</name>
    <name type="common">Satsuma mandarin</name>
    <name type="synonym">Citrus nobilis var. unshiu</name>
    <dbReference type="NCBI Taxonomy" id="55188"/>
</organismHost>
<organism>
    <name type="scientific">Satsuma dwarf virus (isolate Satsuma mandarin/Japan/S-58/1977)</name>
    <name type="common">SDV</name>
    <dbReference type="NCBI Taxonomy" id="650481"/>
    <lineage>
        <taxon>Viruses</taxon>
        <taxon>Riboviria</taxon>
        <taxon>Orthornavirae</taxon>
        <taxon>Pisuviricota</taxon>
        <taxon>Pisoniviricetes</taxon>
        <taxon>Picornavirales</taxon>
        <taxon>Secoviridae</taxon>
        <taxon>Sadwavirus</taxon>
        <taxon>Satsumavirus</taxon>
        <taxon>Sadwavirus citri</taxon>
    </lineage>
</organism>
<keyword id="KW-0067">ATP-binding</keyword>
<keyword id="KW-0235">DNA replication</keyword>
<keyword id="KW-1043">Host membrane</keyword>
<keyword id="KW-0378">Hydrolase</keyword>
<keyword id="KW-0472">Membrane</keyword>
<keyword id="KW-0547">Nucleotide-binding</keyword>
<keyword id="KW-0548">Nucleotidyltransferase</keyword>
<keyword id="KW-0645">Protease</keyword>
<keyword id="KW-1185">Reference proteome</keyword>
<keyword id="KW-0696">RNA-directed RNA polymerase</keyword>
<keyword id="KW-0788">Thiol protease</keyword>
<keyword id="KW-0808">Transferase</keyword>
<keyword id="KW-0812">Transmembrane</keyword>
<keyword id="KW-1133">Transmembrane helix</keyword>
<keyword id="KW-0693">Viral RNA replication</keyword>
<feature type="chain" id="PRO_0000402772" description="RNA1 polyprotein">
    <location>
        <begin position="1"/>
        <end position="2081"/>
    </location>
</feature>
<feature type="chain" id="PRO_0000402773" description="Putative helicase" evidence="2">
    <location>
        <begin position="1" status="uncertain"/>
        <end position="1174" status="uncertain"/>
    </location>
</feature>
<feature type="chain" id="PRO_0000402774" description="Probable picornain 3C-like protease" evidence="1">
    <location>
        <begin position="1175" status="uncertain"/>
        <end position="1400" status="uncertain"/>
    </location>
</feature>
<feature type="chain" id="PRO_0000402775" description="Probable RNA-directed RNA polymerase" evidence="1">
    <location>
        <begin position="1401" status="uncertain"/>
        <end position="2081"/>
    </location>
</feature>
<feature type="transmembrane region" description="Helical" evidence="2">
    <location>
        <begin position="481"/>
        <end position="501"/>
    </location>
</feature>
<feature type="transmembrane region" description="Helical" evidence="2">
    <location>
        <begin position="515"/>
        <end position="535"/>
    </location>
</feature>
<feature type="domain" description="SF3 helicase" evidence="4">
    <location>
        <begin position="714"/>
        <end position="881"/>
    </location>
</feature>
<feature type="domain" description="Peptidase C3" evidence="5">
    <location>
        <begin position="1166"/>
        <end position="1388"/>
    </location>
</feature>
<feature type="domain" description="RdRp catalytic" evidence="3">
    <location>
        <begin position="1679"/>
        <end position="1810"/>
    </location>
</feature>
<feature type="region of interest" description="Disordered" evidence="6">
    <location>
        <begin position="877"/>
        <end position="900"/>
    </location>
</feature>
<feature type="active site" description="For picornain 3C-like protease activity" evidence="5">
    <location>
        <position position="1210"/>
    </location>
</feature>
<feature type="active site" description="For picornain 3C-like protease activity" evidence="5">
    <location>
        <position position="1255"/>
    </location>
</feature>
<feature type="active site" description="For picornain 3C-like protease activity" evidence="5">
    <location>
        <position position="1348"/>
    </location>
</feature>
<feature type="binding site" evidence="4">
    <location>
        <begin position="741"/>
        <end position="748"/>
    </location>
    <ligand>
        <name>ATP</name>
        <dbReference type="ChEBI" id="CHEBI:30616"/>
    </ligand>
</feature>
<evidence type="ECO:0000250" key="1"/>
<evidence type="ECO:0000255" key="2"/>
<evidence type="ECO:0000255" key="3">
    <source>
        <dbReference type="PROSITE-ProRule" id="PRU00539"/>
    </source>
</evidence>
<evidence type="ECO:0000255" key="4">
    <source>
        <dbReference type="PROSITE-ProRule" id="PRU00551"/>
    </source>
</evidence>
<evidence type="ECO:0000255" key="5">
    <source>
        <dbReference type="PROSITE-ProRule" id="PRU01222"/>
    </source>
</evidence>
<evidence type="ECO:0000256" key="6">
    <source>
        <dbReference type="SAM" id="MobiDB-lite"/>
    </source>
</evidence>
<evidence type="ECO:0000305" key="7"/>
<comment type="function">
    <text evidence="1">Picornain 3C-like protease is a thiol protease that probably cleaves the polyprotein.</text>
</comment>
<comment type="catalytic activity">
    <reaction evidence="3">
        <text>RNA(n) + a ribonucleoside 5'-triphosphate = RNA(n+1) + diphosphate</text>
        <dbReference type="Rhea" id="RHEA:21248"/>
        <dbReference type="Rhea" id="RHEA-COMP:14527"/>
        <dbReference type="Rhea" id="RHEA-COMP:17342"/>
        <dbReference type="ChEBI" id="CHEBI:33019"/>
        <dbReference type="ChEBI" id="CHEBI:61557"/>
        <dbReference type="ChEBI" id="CHEBI:140395"/>
        <dbReference type="EC" id="2.7.7.48"/>
    </reaction>
</comment>
<comment type="subcellular location">
    <subcellularLocation>
        <location evidence="7">Host membrane</location>
        <topology evidence="7">Multi-pass membrane protein</topology>
    </subcellularLocation>
</comment>
<dbReference type="EC" id="3.6.4.-"/>
<dbReference type="EC" id="3.4.22.-"/>
<dbReference type="EC" id="2.7.7.48"/>
<dbReference type="EMBL" id="AB009958">
    <property type="protein sequence ID" value="BAA76746.1"/>
    <property type="molecule type" value="Genomic_RNA"/>
</dbReference>
<dbReference type="RefSeq" id="NP_620566.1">
    <property type="nucleotide sequence ID" value="NC_003785.2"/>
</dbReference>
<dbReference type="SMR" id="Q9WAL8"/>
<dbReference type="GeneID" id="993327"/>
<dbReference type="KEGG" id="vg:993327"/>
<dbReference type="Proteomes" id="UP000000675">
    <property type="component" value="Genome"/>
</dbReference>
<dbReference type="GO" id="GO:0033644">
    <property type="term" value="C:host cell membrane"/>
    <property type="evidence" value="ECO:0007669"/>
    <property type="project" value="UniProtKB-SubCell"/>
</dbReference>
<dbReference type="GO" id="GO:0016020">
    <property type="term" value="C:membrane"/>
    <property type="evidence" value="ECO:0007669"/>
    <property type="project" value="UniProtKB-KW"/>
</dbReference>
<dbReference type="GO" id="GO:0005524">
    <property type="term" value="F:ATP binding"/>
    <property type="evidence" value="ECO:0007669"/>
    <property type="project" value="UniProtKB-KW"/>
</dbReference>
<dbReference type="GO" id="GO:0004197">
    <property type="term" value="F:cysteine-type endopeptidase activity"/>
    <property type="evidence" value="ECO:0007669"/>
    <property type="project" value="InterPro"/>
</dbReference>
<dbReference type="GO" id="GO:0003723">
    <property type="term" value="F:RNA binding"/>
    <property type="evidence" value="ECO:0007669"/>
    <property type="project" value="InterPro"/>
</dbReference>
<dbReference type="GO" id="GO:0003724">
    <property type="term" value="F:RNA helicase activity"/>
    <property type="evidence" value="ECO:0007669"/>
    <property type="project" value="InterPro"/>
</dbReference>
<dbReference type="GO" id="GO:0003968">
    <property type="term" value="F:RNA-directed RNA polymerase activity"/>
    <property type="evidence" value="ECO:0007669"/>
    <property type="project" value="UniProtKB-KW"/>
</dbReference>
<dbReference type="GO" id="GO:0006260">
    <property type="term" value="P:DNA replication"/>
    <property type="evidence" value="ECO:0007669"/>
    <property type="project" value="UniProtKB-KW"/>
</dbReference>
<dbReference type="GO" id="GO:0006351">
    <property type="term" value="P:DNA-templated transcription"/>
    <property type="evidence" value="ECO:0007669"/>
    <property type="project" value="InterPro"/>
</dbReference>
<dbReference type="GO" id="GO:0006508">
    <property type="term" value="P:proteolysis"/>
    <property type="evidence" value="ECO:0007669"/>
    <property type="project" value="UniProtKB-KW"/>
</dbReference>
<dbReference type="GO" id="GO:0039694">
    <property type="term" value="P:viral RNA genome replication"/>
    <property type="evidence" value="ECO:0007669"/>
    <property type="project" value="InterPro"/>
</dbReference>
<dbReference type="CDD" id="cd23169">
    <property type="entry name" value="ps-ssRNAv-Picornavirales"/>
    <property type="match status" value="1"/>
</dbReference>
<dbReference type="Gene3D" id="1.20.960.20">
    <property type="match status" value="1"/>
</dbReference>
<dbReference type="Gene3D" id="3.30.70.270">
    <property type="match status" value="1"/>
</dbReference>
<dbReference type="InterPro" id="IPR043502">
    <property type="entry name" value="DNA/RNA_pol_sf"/>
</dbReference>
<dbReference type="InterPro" id="IPR000605">
    <property type="entry name" value="Helicase_SF3_ssDNA/RNA_vir"/>
</dbReference>
<dbReference type="InterPro" id="IPR014759">
    <property type="entry name" value="Helicase_SF3_ssRNA_vir"/>
</dbReference>
<dbReference type="InterPro" id="IPR044067">
    <property type="entry name" value="PCV_3C_PRO"/>
</dbReference>
<dbReference type="InterPro" id="IPR043128">
    <property type="entry name" value="Rev_trsase/Diguanyl_cyclase"/>
</dbReference>
<dbReference type="InterPro" id="IPR001205">
    <property type="entry name" value="RNA-dir_pol_C"/>
</dbReference>
<dbReference type="InterPro" id="IPR007094">
    <property type="entry name" value="RNA-dir_pol_PSvirus"/>
</dbReference>
<dbReference type="Pfam" id="PF00680">
    <property type="entry name" value="RdRP_1"/>
    <property type="match status" value="1"/>
</dbReference>
<dbReference type="Pfam" id="PF00910">
    <property type="entry name" value="RNA_helicase"/>
    <property type="match status" value="1"/>
</dbReference>
<dbReference type="SUPFAM" id="SSF56672">
    <property type="entry name" value="DNA/RNA polymerases"/>
    <property type="match status" value="1"/>
</dbReference>
<dbReference type="PROSITE" id="PS51874">
    <property type="entry name" value="PCV_3C_PRO"/>
    <property type="match status" value="1"/>
</dbReference>
<dbReference type="PROSITE" id="PS50507">
    <property type="entry name" value="RDRP_SSRNA_POS"/>
    <property type="match status" value="1"/>
</dbReference>
<dbReference type="PROSITE" id="PS51218">
    <property type="entry name" value="SF3_HELICASE_2"/>
    <property type="match status" value="1"/>
</dbReference>
<sequence length="2081" mass="230447">MEIYGFSPLSFQDTESWKNSAFAACRGCKTYPIEEVGTDGSVRIRELPVGLVLKGVMAQYRSILWTQFVADPATTTVDRKSFDFWLFCRRAEAAQERAFRARQSKRAAKAAALDAEGLIDRSYKGRTYKVSTRGLSWKSVRAAQKAARNAAKNFGFAISANPFSALSALPSEGKGLSAGETPATVAEVAPQCFWAALRSLKREFSETPVEDLPFLGLVLPALPQRNGELARTLRAQLRAHQAARVVASGVSLREIPRRTTTTVKVVVPRVTIPVVTFNGAVLHHPKHPVIVALLKRVTIRAKPICERRTYVRLVDGPGLFPSPRTPTLDLGFMEKVSELATMPGDSIEKCIAIKCILSNDYNFKEDADMGDVLLSLQSKYTGGGDTAEHRGFISGALYGAGVCVVTSAWKFLDATLHASQIGTQISQILDYIQSGLAWLSSSYASIANFFTKGKVYIMECLELVKAKLPSYLFSAEVGRYILLLLGVFLCLGLVNSLIYSVAPQYSLSFGTVCKISLGALALVGLGDLVAYLFNSPGAKLRAFVNIVCNMCGCKNFFAPSSDGEERSGFSVLSMMGAICALQSLLPANVSRFSWDCGKWAQTFKTGFDCHEKFATVCESLSVWLLSKVGLFKSSESQAMQTILLSSGINTCGWLEKVAAFHSDVHSSQICIPDLLLRARQLIETGDTISDLLSNSTVSLSFLLRERIKLALRELKEDHTQLQLAVDVSVSSECPFVLFFAGDSGVGKSTAMKKFREEVLDKLGYPKTARFYPRNPGEKFWSGYLRHTAVIYDDFAQIPQGDMTYDEAELIRIVTNAVVTVPMAIAEEKGRTFRSKFVFACTNRYCESEDAPLADEMAFRRRRHLYIHVARKPGVEPGPRGVDNLEFSEMDNRDSNGEPAYQLNDQGKRVLINQKLTYDQLLQLYFERYQAFKVLEGQLEGSVARAPSSSNYEGCDNWWTLVGSEAKFEAVYFNGEPVSEDDQLTQLGNYKTRYDILRARVILESIDYADCDFIIKNFSAMGEGIYHADPEVNATGQRHFSAMSPVTRRLICSCLKTRREDEIKSHSLLSKFKSLLTVPVDAWKAAPAWFKCISLLLVAGGVGYALCRAISGIIGIFRKGPAAASLALFSGGIGAVLRGDSPDDPREERDNPDVIVTKGRGKAIWAGAEIPEALEALRKSQVVLMGTGRKGEPVMCSALPITSHSVLCTTHEIEAFDPNQNMSLIVNNSIYSFVLIPGAIMYKRYDQPNLVDKVHELVRVDLPKNKGFSLNARAQFSEDFYDNGTAMKCWVVPNKNPAVADIMRKVDCEKSSQIIDIFASELSRSSGCEPVRQTQRFIYADGPALNGHCGRLLCANLAGHWRVIGMCAGEGKNRAGVTKALYADIPHEFLRADNLNAVQRGAELDAAILDRFSIPISECRKELTPMTTRLGYVVGQYPRALRKTSIVPSIIHDNLWRKPETEPTILGKIDDRSPFPYDPYATIGEKFVQEVGPIDLSVGSDASLVVANIGSSWKAVGKPQCPTVLTWEVAINGDAAIPYCERLPLSTSEGYPDSIQRNFGEKGKKRFFDLKGENVRVPTPALMEELEVLERELQKEEVCLTCINTACAKDEKTAPKKVRVQPKTRIFEILPFQINIIIRRYLMFWMQLLMVAHDELPSKVGINVYSESWDRLLGRHTRLANHFTGDYSGFDTSTPRVLVYAIIDKINELADDGEVNQRTRRNIIRFVLNRYLISDGVLYEIHGGTPSGFAPTVMINSVVNEFYLKWSWIGLLKEAGYANQATLYAFHEATEISLYGDDNFVSVATPVASVYNLTTISNFLGRIGVKLGDGAKTGTIKPFIPLEEVDFLKRQFVADSGSTAILCPLKKISIEERLFYVRGGQDEIAALELNIATALCEAFFHGKEYFSFLEGKIIEAMRKSGVALSRPLPTMESVRAWYMSQRGNTKIRSPSFEGLGTMSGILNIGLAEARSVGGVACFSGIEFRGRSDDHLMVIPTYIPGGWRTKQQQTYISFVRDSEKMAQVIKRVAHFSTVVATDKSMAYLVAICIAYSRGSISRMEVRCHVQNLKVAEMLLCNQICNFL</sequence>
<accession>Q9WAL8</accession>
<proteinExistence type="inferred from homology"/>
<name>POL1_SDVS5</name>